<protein>
    <recommendedName>
        <fullName evidence="1">Chaperonin GroEL</fullName>
        <ecNumber evidence="1">5.6.1.7</ecNumber>
    </recommendedName>
    <alternativeName>
        <fullName evidence="1">60 kDa chaperonin</fullName>
    </alternativeName>
    <alternativeName>
        <fullName evidence="1">Chaperonin-60</fullName>
        <shortName evidence="1">Cpn60</shortName>
    </alternativeName>
</protein>
<sequence>MAAKDVKFGNDARVKMLRGVNVLADAVKVTLGPKGRNVVLDKSFGAPTITKDGVSVAREIELEDKFENMGAQMVKEVASKANDAAGDGTTTATVLAQSIITEGLKAVAAGMNPMDLKRGIDQAVIAAVDELKKLSVPCSDSKAIAQVGTISANSDATVGELIAQAMEKVGKEGVITVEEGTGLQDELDVVEGMQFDRGYLSPYFINKPETGAVELESPFILLADKKISNIREMLPVLEAVAKAGKPLLIIAEDVEGEALATLVVNTMRGIVKVAAVKAPGFGDRRKAMLQDIAVLTGGTVISEEIGMELEKAGLEDMGQAKRVVINKDTTIIIDGTGEEATINGRVTQIRQQIEEATSDYDREKLQERVAKLAGGVAVLKVGAATEVEMKEKKARVEDALHATRAAVEEGVVAGGGVALVRVASKLAELRGQNEDQNVGIKVALRAMESPLRQIVSNAGEEPSVVTNNVKAGEGNYGYNAQTEEYGDMIDFGILDPTKVTRSALQYAASVAGLMITTECMVTDLPKGDAPDLGAGGGMGG</sequence>
<comment type="function">
    <text evidence="1">Together with its co-chaperonin GroES, plays an essential role in assisting protein folding. The GroEL-GroES system forms a nano-cage that allows encapsulation of the non-native substrate proteins and provides a physical environment optimized to promote and accelerate protein folding.</text>
</comment>
<comment type="catalytic activity">
    <reaction evidence="1">
        <text>ATP + H2O + a folded polypeptide = ADP + phosphate + an unfolded polypeptide.</text>
        <dbReference type="EC" id="5.6.1.7"/>
    </reaction>
</comment>
<comment type="subunit">
    <text evidence="1">Forms a cylinder of 14 subunits composed of two heptameric rings stacked back-to-back. Interacts with the co-chaperonin GroES.</text>
</comment>
<comment type="subcellular location">
    <subcellularLocation>
        <location evidence="1">Cytoplasm</location>
    </subcellularLocation>
</comment>
<comment type="similarity">
    <text evidence="1">Belongs to the chaperonin (HSP60) family.</text>
</comment>
<feature type="chain" id="PRO_0000063374" description="Chaperonin GroEL">
    <location>
        <begin position="1"/>
        <end position="540" status="greater than"/>
    </location>
</feature>
<feature type="binding site" evidence="1">
    <location>
        <begin position="30"/>
        <end position="33"/>
    </location>
    <ligand>
        <name>ATP</name>
        <dbReference type="ChEBI" id="CHEBI:30616"/>
    </ligand>
</feature>
<feature type="binding site" evidence="1">
    <location>
        <position position="51"/>
    </location>
    <ligand>
        <name>ATP</name>
        <dbReference type="ChEBI" id="CHEBI:30616"/>
    </ligand>
</feature>
<feature type="binding site" evidence="1">
    <location>
        <begin position="87"/>
        <end position="91"/>
    </location>
    <ligand>
        <name>ATP</name>
        <dbReference type="ChEBI" id="CHEBI:30616"/>
    </ligand>
</feature>
<feature type="binding site" evidence="1">
    <location>
        <position position="415"/>
    </location>
    <ligand>
        <name>ATP</name>
        <dbReference type="ChEBI" id="CHEBI:30616"/>
    </ligand>
</feature>
<feature type="binding site" evidence="1">
    <location>
        <position position="495"/>
    </location>
    <ligand>
        <name>ATP</name>
        <dbReference type="ChEBI" id="CHEBI:30616"/>
    </ligand>
</feature>
<feature type="non-terminal residue">
    <location>
        <position position="540"/>
    </location>
</feature>
<proteinExistence type="inferred from homology"/>
<accession>O66222</accession>
<dbReference type="EC" id="5.6.1.7" evidence="1"/>
<dbReference type="EMBL" id="AB008153">
    <property type="protein sequence ID" value="BAA25239.1"/>
    <property type="molecule type" value="Genomic_DNA"/>
</dbReference>
<dbReference type="SMR" id="O66222"/>
<dbReference type="GO" id="GO:0005737">
    <property type="term" value="C:cytoplasm"/>
    <property type="evidence" value="ECO:0007669"/>
    <property type="project" value="UniProtKB-SubCell"/>
</dbReference>
<dbReference type="GO" id="GO:0005524">
    <property type="term" value="F:ATP binding"/>
    <property type="evidence" value="ECO:0007669"/>
    <property type="project" value="UniProtKB-KW"/>
</dbReference>
<dbReference type="GO" id="GO:0140662">
    <property type="term" value="F:ATP-dependent protein folding chaperone"/>
    <property type="evidence" value="ECO:0007669"/>
    <property type="project" value="InterPro"/>
</dbReference>
<dbReference type="GO" id="GO:0016853">
    <property type="term" value="F:isomerase activity"/>
    <property type="evidence" value="ECO:0007669"/>
    <property type="project" value="UniProtKB-KW"/>
</dbReference>
<dbReference type="GO" id="GO:0042026">
    <property type="term" value="P:protein refolding"/>
    <property type="evidence" value="ECO:0007669"/>
    <property type="project" value="InterPro"/>
</dbReference>
<dbReference type="CDD" id="cd03344">
    <property type="entry name" value="GroEL"/>
    <property type="match status" value="1"/>
</dbReference>
<dbReference type="FunFam" id="1.10.560.10:FF:000001">
    <property type="entry name" value="60 kDa chaperonin"/>
    <property type="match status" value="1"/>
</dbReference>
<dbReference type="FunFam" id="3.50.7.10:FF:000001">
    <property type="entry name" value="60 kDa chaperonin"/>
    <property type="match status" value="1"/>
</dbReference>
<dbReference type="Gene3D" id="3.50.7.10">
    <property type="entry name" value="GroEL"/>
    <property type="match status" value="1"/>
</dbReference>
<dbReference type="Gene3D" id="1.10.560.10">
    <property type="entry name" value="GroEL-like equatorial domain"/>
    <property type="match status" value="1"/>
</dbReference>
<dbReference type="Gene3D" id="3.30.260.10">
    <property type="entry name" value="TCP-1-like chaperonin intermediate domain"/>
    <property type="match status" value="1"/>
</dbReference>
<dbReference type="HAMAP" id="MF_00600">
    <property type="entry name" value="CH60"/>
    <property type="match status" value="1"/>
</dbReference>
<dbReference type="InterPro" id="IPR018370">
    <property type="entry name" value="Chaperonin_Cpn60_CS"/>
</dbReference>
<dbReference type="InterPro" id="IPR001844">
    <property type="entry name" value="Cpn60/GroEL"/>
</dbReference>
<dbReference type="InterPro" id="IPR002423">
    <property type="entry name" value="Cpn60/GroEL/TCP-1"/>
</dbReference>
<dbReference type="InterPro" id="IPR027409">
    <property type="entry name" value="GroEL-like_apical_dom_sf"/>
</dbReference>
<dbReference type="InterPro" id="IPR027413">
    <property type="entry name" value="GROEL-like_equatorial_sf"/>
</dbReference>
<dbReference type="InterPro" id="IPR027410">
    <property type="entry name" value="TCP-1-like_intermed_sf"/>
</dbReference>
<dbReference type="NCBIfam" id="TIGR02348">
    <property type="entry name" value="GroEL"/>
    <property type="match status" value="1"/>
</dbReference>
<dbReference type="NCBIfam" id="NF000592">
    <property type="entry name" value="PRK00013.1"/>
    <property type="match status" value="1"/>
</dbReference>
<dbReference type="NCBIfam" id="NF009487">
    <property type="entry name" value="PRK12849.1"/>
    <property type="match status" value="1"/>
</dbReference>
<dbReference type="NCBIfam" id="NF009488">
    <property type="entry name" value="PRK12850.1"/>
    <property type="match status" value="1"/>
</dbReference>
<dbReference type="NCBIfam" id="NF009489">
    <property type="entry name" value="PRK12851.1"/>
    <property type="match status" value="1"/>
</dbReference>
<dbReference type="PANTHER" id="PTHR45633">
    <property type="entry name" value="60 KDA HEAT SHOCK PROTEIN, MITOCHONDRIAL"/>
    <property type="match status" value="1"/>
</dbReference>
<dbReference type="Pfam" id="PF00118">
    <property type="entry name" value="Cpn60_TCP1"/>
    <property type="match status" value="1"/>
</dbReference>
<dbReference type="PRINTS" id="PR00298">
    <property type="entry name" value="CHAPERONIN60"/>
</dbReference>
<dbReference type="SUPFAM" id="SSF52029">
    <property type="entry name" value="GroEL apical domain-like"/>
    <property type="match status" value="1"/>
</dbReference>
<dbReference type="SUPFAM" id="SSF48592">
    <property type="entry name" value="GroEL equatorial domain-like"/>
    <property type="match status" value="1"/>
</dbReference>
<dbReference type="SUPFAM" id="SSF54849">
    <property type="entry name" value="GroEL-intermediate domain like"/>
    <property type="match status" value="1"/>
</dbReference>
<dbReference type="PROSITE" id="PS00296">
    <property type="entry name" value="CHAPERONINS_CPN60"/>
    <property type="match status" value="1"/>
</dbReference>
<reference key="1">
    <citation type="journal article" date="1997" name="J. Gen. Appl. Microbiol.">
        <title>Phylogenetical relationship based on groE genes among phenotypically related Enterobacter, Pantoea, Klebsiella, Serratia, and Erwinia species.</title>
        <authorList>
            <person name="Harada H."/>
            <person name="Ishikawa H."/>
        </authorList>
    </citation>
    <scope>NUCLEOTIDE SEQUENCE [GENOMIC DNA]</scope>
    <source>
        <strain>DSM 19347 / CFBP 6829 / CIP 106296 / IAM 14479 / LMG 24877 / NBRC 102417</strain>
    </source>
</reference>
<gene>
    <name evidence="1" type="primary">groEL</name>
    <name evidence="1" type="synonym">groL</name>
    <name type="synonym">mopA</name>
</gene>
<name>CH60_ERWAP</name>
<keyword id="KW-0067">ATP-binding</keyword>
<keyword id="KW-0143">Chaperone</keyword>
<keyword id="KW-0963">Cytoplasm</keyword>
<keyword id="KW-0413">Isomerase</keyword>
<keyword id="KW-0547">Nucleotide-binding</keyword>
<evidence type="ECO:0000255" key="1">
    <source>
        <dbReference type="HAMAP-Rule" id="MF_00600"/>
    </source>
</evidence>
<organism>
    <name type="scientific">Erwinia aphidicola</name>
    <dbReference type="NCBI Taxonomy" id="68334"/>
    <lineage>
        <taxon>Bacteria</taxon>
        <taxon>Pseudomonadati</taxon>
        <taxon>Pseudomonadota</taxon>
        <taxon>Gammaproteobacteria</taxon>
        <taxon>Enterobacterales</taxon>
        <taxon>Erwiniaceae</taxon>
        <taxon>Erwinia</taxon>
    </lineage>
</organism>